<accession>Q1JDX0</accession>
<sequence>MNQGKIITVSGPLVVASGMQEANIQDICRVGHLGLVGEIIEMRRDQASIQVYEETSGIGPGEPVVTTGCPLSVELGPGLISEMFDGIQRPLDRFQKATDSDFLIRGVAIPSLDRKAKWAFIPKLSVGQEVVAGDILGTVQETAVIEHRIMVPYKVSGTLVAIHAGNFTVTDTVYEIKQEDGSIYQGSLMQTWPVRQSRPVAQKLIPVEPLVTGQRVIDTFFPVTKGGAAAVPGPFGAGKTVVQHQIAKFANVDIVIYVGCGERGNEMTDVLNEFPELIDPNTGQSIMERTVLIANTSNMPVAAREASIYTGITIAEYFRDMGYSVAIMADSTSRWAEALREMSGRLQEMPGDEGYPAYLGSRIAEYYERAGRVRTLGSQEREGTITAIGAVSPPGGDISEPVTQNTLRIVKVFWGLDAPLAQRRHFPAINWLTSYSLYQDDVGSYIDRKQESNWSNKVTRAMAILQREASLEEIVRLVGLDSLSEQDRLTMAVARQIREDYLQQNAFDSVDTFTSFPKQEAMLTNILTFNEEASKALSLGAYFKEIMEGTAQVRDRIARSKFIPEENLEQIKGLTQKVTKEIHHVLAKGGI</sequence>
<keyword id="KW-0066">ATP synthesis</keyword>
<keyword id="KW-0067">ATP-binding</keyword>
<keyword id="KW-0375">Hydrogen ion transport</keyword>
<keyword id="KW-0406">Ion transport</keyword>
<keyword id="KW-0547">Nucleotide-binding</keyword>
<keyword id="KW-1278">Translocase</keyword>
<keyword id="KW-0813">Transport</keyword>
<comment type="function">
    <text evidence="1">Produces ATP from ADP in the presence of a proton gradient across the membrane. The V-type alpha chain is a catalytic subunit.</text>
</comment>
<comment type="catalytic activity">
    <reaction evidence="1">
        <text>ATP + H2O + 4 H(+)(in) = ADP + phosphate + 5 H(+)(out)</text>
        <dbReference type="Rhea" id="RHEA:57720"/>
        <dbReference type="ChEBI" id="CHEBI:15377"/>
        <dbReference type="ChEBI" id="CHEBI:15378"/>
        <dbReference type="ChEBI" id="CHEBI:30616"/>
        <dbReference type="ChEBI" id="CHEBI:43474"/>
        <dbReference type="ChEBI" id="CHEBI:456216"/>
        <dbReference type="EC" id="7.1.2.2"/>
    </reaction>
</comment>
<comment type="similarity">
    <text evidence="1">Belongs to the ATPase alpha/beta chains family.</text>
</comment>
<protein>
    <recommendedName>
        <fullName evidence="1">V-type ATP synthase alpha chain</fullName>
        <ecNumber evidence="1">7.1.2.2</ecNumber>
    </recommendedName>
    <alternativeName>
        <fullName evidence="1">V-ATPase subunit A</fullName>
    </alternativeName>
</protein>
<name>VATA_STRPB</name>
<dbReference type="EC" id="7.1.2.2" evidence="1"/>
<dbReference type="EMBL" id="CP000261">
    <property type="protein sequence ID" value="ABF35188.1"/>
    <property type="molecule type" value="Genomic_DNA"/>
</dbReference>
<dbReference type="SMR" id="Q1JDX0"/>
<dbReference type="KEGG" id="spj:MGAS2096_Spy0136"/>
<dbReference type="HOGENOM" id="CLU_008162_3_1_9"/>
<dbReference type="GO" id="GO:0045259">
    <property type="term" value="C:proton-transporting ATP synthase complex"/>
    <property type="evidence" value="ECO:0007669"/>
    <property type="project" value="UniProtKB-ARBA"/>
</dbReference>
<dbReference type="GO" id="GO:0005524">
    <property type="term" value="F:ATP binding"/>
    <property type="evidence" value="ECO:0007669"/>
    <property type="project" value="UniProtKB-UniRule"/>
</dbReference>
<dbReference type="GO" id="GO:0046933">
    <property type="term" value="F:proton-transporting ATP synthase activity, rotational mechanism"/>
    <property type="evidence" value="ECO:0007669"/>
    <property type="project" value="UniProtKB-UniRule"/>
</dbReference>
<dbReference type="GO" id="GO:0046961">
    <property type="term" value="F:proton-transporting ATPase activity, rotational mechanism"/>
    <property type="evidence" value="ECO:0007669"/>
    <property type="project" value="InterPro"/>
</dbReference>
<dbReference type="GO" id="GO:0042777">
    <property type="term" value="P:proton motive force-driven plasma membrane ATP synthesis"/>
    <property type="evidence" value="ECO:0007669"/>
    <property type="project" value="UniProtKB-UniRule"/>
</dbReference>
<dbReference type="CDD" id="cd18111">
    <property type="entry name" value="ATP-synt_V_A-type_alpha_C"/>
    <property type="match status" value="1"/>
</dbReference>
<dbReference type="CDD" id="cd18119">
    <property type="entry name" value="ATP-synt_V_A-type_alpha_N"/>
    <property type="match status" value="1"/>
</dbReference>
<dbReference type="CDD" id="cd01134">
    <property type="entry name" value="V_A-ATPase_A"/>
    <property type="match status" value="1"/>
</dbReference>
<dbReference type="FunFam" id="3.40.50.300:FF:000675">
    <property type="entry name" value="V-type ATP synthase alpha chain"/>
    <property type="match status" value="1"/>
</dbReference>
<dbReference type="FunFam" id="2.40.30.20:FF:000002">
    <property type="entry name" value="V-type proton ATPase catalytic subunit A"/>
    <property type="match status" value="1"/>
</dbReference>
<dbReference type="FunFam" id="2.40.50.100:FF:000008">
    <property type="entry name" value="V-type proton ATPase catalytic subunit A"/>
    <property type="match status" value="1"/>
</dbReference>
<dbReference type="Gene3D" id="2.40.30.20">
    <property type="match status" value="1"/>
</dbReference>
<dbReference type="Gene3D" id="2.40.50.100">
    <property type="match status" value="1"/>
</dbReference>
<dbReference type="Gene3D" id="1.10.1140.10">
    <property type="entry name" value="Bovine Mitochondrial F1-atpase, Atp Synthase Beta Chain, Chain D, domain 3"/>
    <property type="match status" value="1"/>
</dbReference>
<dbReference type="Gene3D" id="3.40.50.300">
    <property type="entry name" value="P-loop containing nucleotide triphosphate hydrolases"/>
    <property type="match status" value="1"/>
</dbReference>
<dbReference type="HAMAP" id="MF_00309">
    <property type="entry name" value="ATP_synth_A_arch"/>
    <property type="match status" value="1"/>
</dbReference>
<dbReference type="InterPro" id="IPR055190">
    <property type="entry name" value="ATP-synt_VA_C"/>
</dbReference>
<dbReference type="InterPro" id="IPR031686">
    <property type="entry name" value="ATP-synth_a_Xtn"/>
</dbReference>
<dbReference type="InterPro" id="IPR023366">
    <property type="entry name" value="ATP_synth_asu-like_sf"/>
</dbReference>
<dbReference type="InterPro" id="IPR020003">
    <property type="entry name" value="ATPase_a/bsu_AS"/>
</dbReference>
<dbReference type="InterPro" id="IPR004100">
    <property type="entry name" value="ATPase_F1/V1/A1_a/bsu_N"/>
</dbReference>
<dbReference type="InterPro" id="IPR036121">
    <property type="entry name" value="ATPase_F1/V1/A1_a/bsu_N_sf"/>
</dbReference>
<dbReference type="InterPro" id="IPR000194">
    <property type="entry name" value="ATPase_F1/V1/A1_a/bsu_nucl-bd"/>
</dbReference>
<dbReference type="InterPro" id="IPR024034">
    <property type="entry name" value="ATPase_F1/V1_b/a_C"/>
</dbReference>
<dbReference type="InterPro" id="IPR027417">
    <property type="entry name" value="P-loop_NTPase"/>
</dbReference>
<dbReference type="InterPro" id="IPR022878">
    <property type="entry name" value="V-ATPase_asu"/>
</dbReference>
<dbReference type="NCBIfam" id="NF003220">
    <property type="entry name" value="PRK04192.1"/>
    <property type="match status" value="1"/>
</dbReference>
<dbReference type="PANTHER" id="PTHR43607:SF1">
    <property type="entry name" value="H(+)-TRANSPORTING TWO-SECTOR ATPASE"/>
    <property type="match status" value="1"/>
</dbReference>
<dbReference type="PANTHER" id="PTHR43607">
    <property type="entry name" value="V-TYPE PROTON ATPASE CATALYTIC SUBUNIT A"/>
    <property type="match status" value="1"/>
</dbReference>
<dbReference type="Pfam" id="PF00006">
    <property type="entry name" value="ATP-synt_ab"/>
    <property type="match status" value="1"/>
</dbReference>
<dbReference type="Pfam" id="PF02874">
    <property type="entry name" value="ATP-synt_ab_N"/>
    <property type="match status" value="1"/>
</dbReference>
<dbReference type="Pfam" id="PF16886">
    <property type="entry name" value="ATP-synt_ab_Xtn"/>
    <property type="match status" value="1"/>
</dbReference>
<dbReference type="Pfam" id="PF22919">
    <property type="entry name" value="ATP-synt_VA_C"/>
    <property type="match status" value="1"/>
</dbReference>
<dbReference type="SUPFAM" id="SSF47917">
    <property type="entry name" value="C-terminal domain of alpha and beta subunits of F1 ATP synthase"/>
    <property type="match status" value="1"/>
</dbReference>
<dbReference type="SUPFAM" id="SSF50615">
    <property type="entry name" value="N-terminal domain of alpha and beta subunits of F1 ATP synthase"/>
    <property type="match status" value="1"/>
</dbReference>
<dbReference type="SUPFAM" id="SSF52540">
    <property type="entry name" value="P-loop containing nucleoside triphosphate hydrolases"/>
    <property type="match status" value="1"/>
</dbReference>
<dbReference type="PROSITE" id="PS00152">
    <property type="entry name" value="ATPASE_ALPHA_BETA"/>
    <property type="match status" value="1"/>
</dbReference>
<gene>
    <name evidence="1" type="primary">atpA</name>
    <name type="ordered locus">MGAS2096_Spy0136</name>
</gene>
<feature type="chain" id="PRO_1000059353" description="V-type ATP synthase alpha chain">
    <location>
        <begin position="1"/>
        <end position="591"/>
    </location>
</feature>
<feature type="binding site" evidence="1">
    <location>
        <begin position="233"/>
        <end position="240"/>
    </location>
    <ligand>
        <name>ATP</name>
        <dbReference type="ChEBI" id="CHEBI:30616"/>
    </ligand>
</feature>
<evidence type="ECO:0000255" key="1">
    <source>
        <dbReference type="HAMAP-Rule" id="MF_00309"/>
    </source>
</evidence>
<organism>
    <name type="scientific">Streptococcus pyogenes serotype M12 (strain MGAS2096)</name>
    <dbReference type="NCBI Taxonomy" id="370553"/>
    <lineage>
        <taxon>Bacteria</taxon>
        <taxon>Bacillati</taxon>
        <taxon>Bacillota</taxon>
        <taxon>Bacilli</taxon>
        <taxon>Lactobacillales</taxon>
        <taxon>Streptococcaceae</taxon>
        <taxon>Streptococcus</taxon>
    </lineage>
</organism>
<reference key="1">
    <citation type="journal article" date="2006" name="Proc. Natl. Acad. Sci. U.S.A.">
        <title>Molecular genetic anatomy of inter- and intraserotype variation in the human bacterial pathogen group A Streptococcus.</title>
        <authorList>
            <person name="Beres S.B."/>
            <person name="Richter E.W."/>
            <person name="Nagiec M.J."/>
            <person name="Sumby P."/>
            <person name="Porcella S.F."/>
            <person name="DeLeo F.R."/>
            <person name="Musser J.M."/>
        </authorList>
    </citation>
    <scope>NUCLEOTIDE SEQUENCE [LARGE SCALE GENOMIC DNA]</scope>
    <source>
        <strain>MGAS2096</strain>
    </source>
</reference>
<proteinExistence type="inferred from homology"/>